<comment type="function">
    <text evidence="1">Required to generate and maintain the structure of the tubular endoplasmic reticulum network and the vacuole. Induces high curvature in membranes and causes membrane tubule formation. Involved in membrane/vesicle trafficking.</text>
</comment>
<comment type="subunit">
    <text evidence="1">Oligomer.</text>
</comment>
<comment type="subcellular location">
    <subcellularLocation>
        <location evidence="1">Endoplasmic reticulum membrane</location>
        <topology evidence="1">Multi-pass membrane protein</topology>
    </subcellularLocation>
    <subcellularLocation>
        <location evidence="1">Golgi apparatus membrane</location>
        <topology evidence="2">Multi-pass membrane protein</topology>
    </subcellularLocation>
</comment>
<comment type="domain">
    <text evidence="1">The short lumenal loops between transmembrane domains 1 and 2 and between transmembrane domains 3 and 4 may impart a wedge-like configuration, thus deforming membranes.</text>
</comment>
<comment type="similarity">
    <text evidence="3">Belongs to the DP1 family.</text>
</comment>
<proteinExistence type="inferred from homology"/>
<feature type="chain" id="PRO_0000101849" description="Protein YOP1">
    <location>
        <begin position="1"/>
        <end position="177"/>
    </location>
</feature>
<feature type="topological domain" description="Cytoplasmic" evidence="1">
    <location>
        <begin position="1"/>
        <end position="35"/>
    </location>
</feature>
<feature type="transmembrane region" description="Helical" evidence="1">
    <location>
        <begin position="36"/>
        <end position="55"/>
    </location>
</feature>
<feature type="topological domain" description="Lumenal" evidence="1">
    <location>
        <begin position="56"/>
        <end position="57"/>
    </location>
</feature>
<feature type="transmembrane region" description="Helical" evidence="1">
    <location>
        <begin position="58"/>
        <end position="78"/>
    </location>
</feature>
<feature type="topological domain" description="Cytoplasmic" evidence="1">
    <location>
        <begin position="79"/>
        <end position="88"/>
    </location>
</feature>
<feature type="transmembrane region" description="Helical" evidence="1">
    <location>
        <begin position="89"/>
        <end position="103"/>
    </location>
</feature>
<feature type="topological domain" description="Lumenal" evidence="1">
    <location>
        <begin position="104"/>
        <end position="108"/>
    </location>
</feature>
<feature type="transmembrane region" description="Helical" evidence="1">
    <location>
        <begin position="109"/>
        <end position="127"/>
    </location>
</feature>
<feature type="topological domain" description="Cytoplasmic" evidence="1">
    <location>
        <begin position="128"/>
        <end position="177"/>
    </location>
</feature>
<keyword id="KW-0256">Endoplasmic reticulum</keyword>
<keyword id="KW-0333">Golgi apparatus</keyword>
<keyword id="KW-0472">Membrane</keyword>
<keyword id="KW-1185">Reference proteome</keyword>
<keyword id="KW-0812">Transmembrane</keyword>
<keyword id="KW-1133">Transmembrane helix</keyword>
<name>YOP1_CANGA</name>
<gene>
    <name type="primary">YOP1</name>
    <name type="ordered locus">CAGL0K05203g</name>
</gene>
<reference key="1">
    <citation type="journal article" date="2004" name="Nature">
        <title>Genome evolution in yeasts.</title>
        <authorList>
            <person name="Dujon B."/>
            <person name="Sherman D."/>
            <person name="Fischer G."/>
            <person name="Durrens P."/>
            <person name="Casaregola S."/>
            <person name="Lafontaine I."/>
            <person name="de Montigny J."/>
            <person name="Marck C."/>
            <person name="Neuveglise C."/>
            <person name="Talla E."/>
            <person name="Goffard N."/>
            <person name="Frangeul L."/>
            <person name="Aigle M."/>
            <person name="Anthouard V."/>
            <person name="Babour A."/>
            <person name="Barbe V."/>
            <person name="Barnay S."/>
            <person name="Blanchin S."/>
            <person name="Beckerich J.-M."/>
            <person name="Beyne E."/>
            <person name="Bleykasten C."/>
            <person name="Boisrame A."/>
            <person name="Boyer J."/>
            <person name="Cattolico L."/>
            <person name="Confanioleri F."/>
            <person name="de Daruvar A."/>
            <person name="Despons L."/>
            <person name="Fabre E."/>
            <person name="Fairhead C."/>
            <person name="Ferry-Dumazet H."/>
            <person name="Groppi A."/>
            <person name="Hantraye F."/>
            <person name="Hennequin C."/>
            <person name="Jauniaux N."/>
            <person name="Joyet P."/>
            <person name="Kachouri R."/>
            <person name="Kerrest A."/>
            <person name="Koszul R."/>
            <person name="Lemaire M."/>
            <person name="Lesur I."/>
            <person name="Ma L."/>
            <person name="Muller H."/>
            <person name="Nicaud J.-M."/>
            <person name="Nikolski M."/>
            <person name="Oztas S."/>
            <person name="Ozier-Kalogeropoulos O."/>
            <person name="Pellenz S."/>
            <person name="Potier S."/>
            <person name="Richard G.-F."/>
            <person name="Straub M.-L."/>
            <person name="Suleau A."/>
            <person name="Swennen D."/>
            <person name="Tekaia F."/>
            <person name="Wesolowski-Louvel M."/>
            <person name="Westhof E."/>
            <person name="Wirth B."/>
            <person name="Zeniou-Meyer M."/>
            <person name="Zivanovic Y."/>
            <person name="Bolotin-Fukuhara M."/>
            <person name="Thierry A."/>
            <person name="Bouchier C."/>
            <person name="Caudron B."/>
            <person name="Scarpelli C."/>
            <person name="Gaillardin C."/>
            <person name="Weissenbach J."/>
            <person name="Wincker P."/>
            <person name="Souciet J.-L."/>
        </authorList>
    </citation>
    <scope>NUCLEOTIDE SEQUENCE [LARGE SCALE GENOMIC DNA]</scope>
    <source>
        <strain>ATCC 2001 / BCRC 20586 / JCM 3761 / NBRC 0622 / NRRL Y-65 / CBS 138</strain>
    </source>
</reference>
<protein>
    <recommendedName>
        <fullName>Protein YOP1</fullName>
    </recommendedName>
</protein>
<dbReference type="EMBL" id="CR380957">
    <property type="protein sequence ID" value="CAG61412.1"/>
    <property type="molecule type" value="Genomic_DNA"/>
</dbReference>
<dbReference type="RefSeq" id="XP_448451.1">
    <property type="nucleotide sequence ID" value="XM_448451.1"/>
</dbReference>
<dbReference type="FunCoup" id="Q6FMU3">
    <property type="interactions" value="387"/>
</dbReference>
<dbReference type="STRING" id="284593.Q6FMU3"/>
<dbReference type="EnsemblFungi" id="CAGL0K05203g-T">
    <property type="protein sequence ID" value="CAGL0K05203g-T-p1"/>
    <property type="gene ID" value="CAGL0K05203g"/>
</dbReference>
<dbReference type="KEGG" id="cgr:2890509"/>
<dbReference type="CGD" id="CAL0133823">
    <property type="gene designation" value="CAGL0K05203g"/>
</dbReference>
<dbReference type="VEuPathDB" id="FungiDB:B1J91_K05203g"/>
<dbReference type="VEuPathDB" id="FungiDB:CAGL0K05203g"/>
<dbReference type="eggNOG" id="KOG1725">
    <property type="taxonomic scope" value="Eukaryota"/>
</dbReference>
<dbReference type="HOGENOM" id="CLU_028431_2_1_1"/>
<dbReference type="InParanoid" id="Q6FMU3"/>
<dbReference type="OMA" id="DTQYWVV"/>
<dbReference type="Proteomes" id="UP000002428">
    <property type="component" value="Chromosome K"/>
</dbReference>
<dbReference type="GO" id="GO:0032153">
    <property type="term" value="C:cell division site"/>
    <property type="evidence" value="ECO:0007669"/>
    <property type="project" value="EnsemblFungi"/>
</dbReference>
<dbReference type="GO" id="GO:0032541">
    <property type="term" value="C:cortical endoplasmic reticulum"/>
    <property type="evidence" value="ECO:0007669"/>
    <property type="project" value="EnsemblFungi"/>
</dbReference>
<dbReference type="GO" id="GO:0005789">
    <property type="term" value="C:endoplasmic reticulum membrane"/>
    <property type="evidence" value="ECO:0007669"/>
    <property type="project" value="UniProtKB-SubCell"/>
</dbReference>
<dbReference type="GO" id="GO:0000139">
    <property type="term" value="C:Golgi membrane"/>
    <property type="evidence" value="ECO:0007669"/>
    <property type="project" value="UniProtKB-SubCell"/>
</dbReference>
<dbReference type="GO" id="GO:0005635">
    <property type="term" value="C:nuclear envelope"/>
    <property type="evidence" value="ECO:0007669"/>
    <property type="project" value="EnsemblFungi"/>
</dbReference>
<dbReference type="GO" id="GO:0180020">
    <property type="term" value="F:membrane bending activity"/>
    <property type="evidence" value="ECO:0007669"/>
    <property type="project" value="EnsemblFungi"/>
</dbReference>
<dbReference type="GO" id="GO:0048309">
    <property type="term" value="P:endoplasmic reticulum inheritance"/>
    <property type="evidence" value="ECO:0007669"/>
    <property type="project" value="EnsemblFungi"/>
</dbReference>
<dbReference type="GO" id="GO:1990809">
    <property type="term" value="P:endoplasmic reticulum tubular network membrane organization"/>
    <property type="evidence" value="ECO:0007669"/>
    <property type="project" value="EnsemblFungi"/>
</dbReference>
<dbReference type="GO" id="GO:0032581">
    <property type="term" value="P:ER-dependent peroxisome organization"/>
    <property type="evidence" value="ECO:0007669"/>
    <property type="project" value="EnsemblFungi"/>
</dbReference>
<dbReference type="GO" id="GO:0051292">
    <property type="term" value="P:nuclear pore complex assembly"/>
    <property type="evidence" value="ECO:0007669"/>
    <property type="project" value="EnsemblFungi"/>
</dbReference>
<dbReference type="GO" id="GO:0034976">
    <property type="term" value="P:response to endoplasmic reticulum stress"/>
    <property type="evidence" value="ECO:0007669"/>
    <property type="project" value="EnsemblFungi"/>
</dbReference>
<dbReference type="GO" id="GO:0007033">
    <property type="term" value="P:vacuole organization"/>
    <property type="evidence" value="ECO:0007669"/>
    <property type="project" value="EnsemblFungi"/>
</dbReference>
<dbReference type="GO" id="GO:0016192">
    <property type="term" value="P:vesicle-mediated transport"/>
    <property type="evidence" value="ECO:0007669"/>
    <property type="project" value="EnsemblFungi"/>
</dbReference>
<dbReference type="InterPro" id="IPR004345">
    <property type="entry name" value="TB2_DP1_HVA22"/>
</dbReference>
<dbReference type="PANTHER" id="PTHR12300">
    <property type="entry name" value="HVA22-LIKE PROTEINS"/>
    <property type="match status" value="1"/>
</dbReference>
<dbReference type="PANTHER" id="PTHR12300:SF161">
    <property type="entry name" value="RECEPTOR EXPRESSION-ENHANCING PROTEIN"/>
    <property type="match status" value="1"/>
</dbReference>
<dbReference type="Pfam" id="PF03134">
    <property type="entry name" value="TB2_DP1_HVA22"/>
    <property type="match status" value="1"/>
</dbReference>
<organism>
    <name type="scientific">Candida glabrata (strain ATCC 2001 / BCRC 20586 / JCM 3761 / NBRC 0622 / NRRL Y-65 / CBS 138)</name>
    <name type="common">Yeast</name>
    <name type="synonym">Nakaseomyces glabratus</name>
    <dbReference type="NCBI Taxonomy" id="284593"/>
    <lineage>
        <taxon>Eukaryota</taxon>
        <taxon>Fungi</taxon>
        <taxon>Dikarya</taxon>
        <taxon>Ascomycota</taxon>
        <taxon>Saccharomycotina</taxon>
        <taxon>Saccharomycetes</taxon>
        <taxon>Saccharomycetales</taxon>
        <taxon>Saccharomycetaceae</taxon>
        <taxon>Nakaseomyces</taxon>
    </lineage>
</organism>
<accession>Q6FMU3</accession>
<evidence type="ECO:0000250" key="1">
    <source>
        <dbReference type="UniProtKB" id="Q12402"/>
    </source>
</evidence>
<evidence type="ECO:0000255" key="2"/>
<evidence type="ECO:0000305" key="3"/>
<sequence length="177" mass="19867">MADVISSLQTQLKELDTKFAGNNVLNQLEQRTNLPKSYLVVGSTIFYLLLIFINVGGIGEILGNFAGFVIPAYYSILALKTTTTKDDTQLLTYWIVFSFLNVIEFWSKALLYIIPFYWFLKTIFLLYIALPQTGGATMIYNRFISPLTDKYILGPKKTDGVQQSVKEASRATGAATH</sequence>